<feature type="chain" id="PRO_0000210316" description="Mannosyl-oligosaccharide alpha-1,2-mannosidase IA">
    <location>
        <begin position="1"/>
        <end position="667"/>
    </location>
</feature>
<feature type="topological domain" description="Cytoplasmic" evidence="5">
    <location>
        <begin position="1"/>
        <end position="18"/>
    </location>
</feature>
<feature type="transmembrane region" description="Helical; Signal-anchor for type II membrane protein" evidence="5">
    <location>
        <begin position="19"/>
        <end position="39"/>
    </location>
</feature>
<feature type="topological domain" description="Lumenal" evidence="5">
    <location>
        <begin position="40"/>
        <end position="667"/>
    </location>
</feature>
<feature type="region of interest" description="Disordered" evidence="7">
    <location>
        <begin position="154"/>
        <end position="192"/>
    </location>
</feature>
<feature type="compositionally biased region" description="Low complexity" evidence="7">
    <location>
        <begin position="156"/>
        <end position="178"/>
    </location>
</feature>
<feature type="active site" description="Proton donor" evidence="1">
    <location>
        <position position="529"/>
    </location>
</feature>
<feature type="binding site" evidence="2">
    <location>
        <position position="640"/>
    </location>
    <ligand>
        <name>Ca(2+)</name>
        <dbReference type="ChEBI" id="CHEBI:29108"/>
    </ligand>
</feature>
<feature type="glycosylation site" description="N-linked (GlcNAc...) asparagine" evidence="5">
    <location>
        <position position="278"/>
    </location>
</feature>
<feature type="disulfide bond" evidence="2">
    <location>
        <begin position="483"/>
        <end position="515"/>
    </location>
</feature>
<feature type="splice variant" id="VSP_057904" description="In isoform K.">
    <original>MYRISPIGRKSNFHSREKCLIGLVLVTLCFLCFGGIFLLPDNFGSDRVLRVYKHFRKAGPEIFIPAPPLAAHAPHRSEDPHFIGDRQRLEQKIRAELGDMLDEPPAAGGGEPGQFQVLAQQAQAPAPVAALADQPLDQDEGHAAIPVLAAPVQGDNAASQASSHPQSSAQQHNQQQPQLPLGGGGNDQAPDTLDATLEERRQKVKE</original>
    <variation>MCPKTSKTTPLLLIGGICFVIVLVGITGITLINNINLSNIIRLNEKVASDSVSNNENQIKELNYVNNHPRNVYLKLNASSRDDEDDEQMQKEQEQLELPKISAVIGGSKPKVEDNQVKESSEVISPSTSTFSMRSSAGELTSTSAPLSSIVSVTAPPMPFGGVKYNQSSGLIDYEKRNQVVK</variation>
    <location>
        <begin position="1"/>
        <end position="206"/>
    </location>
</feature>
<feature type="sequence conflict" description="In Ref. 1; CAA57962." evidence="10" ref="1">
    <original>I</original>
    <variation>T</variation>
    <location>
        <position position="21"/>
    </location>
</feature>
<feature type="sequence conflict" description="In Ref. 1; CAA57962." evidence="10" ref="1">
    <original>D</original>
    <variation>E</variation>
    <location>
        <position position="568"/>
    </location>
</feature>
<dbReference type="EC" id="3.2.1.113" evidence="2"/>
<dbReference type="EMBL" id="X82640">
    <property type="protein sequence ID" value="CAA57962.1"/>
    <property type="molecule type" value="mRNA"/>
</dbReference>
<dbReference type="EMBL" id="X82641">
    <property type="protein sequence ID" value="CAA57963.1"/>
    <property type="molecule type" value="mRNA"/>
</dbReference>
<dbReference type="EMBL" id="AE014298">
    <property type="protein sequence ID" value="AAF46570.1"/>
    <property type="molecule type" value="Genomic_DNA"/>
</dbReference>
<dbReference type="EMBL" id="AE014298">
    <property type="protein sequence ID" value="AAF46571.3"/>
    <property type="molecule type" value="Genomic_DNA"/>
</dbReference>
<dbReference type="EMBL" id="AE014298">
    <property type="protein sequence ID" value="AAS65302.1"/>
    <property type="molecule type" value="Genomic_DNA"/>
</dbReference>
<dbReference type="EMBL" id="AE014298">
    <property type="protein sequence ID" value="AAS65303.1"/>
    <property type="molecule type" value="Genomic_DNA"/>
</dbReference>
<dbReference type="EMBL" id="AE014298">
    <property type="protein sequence ID" value="AAS65304.1"/>
    <property type="molecule type" value="Genomic_DNA"/>
</dbReference>
<dbReference type="EMBL" id="AE014298">
    <property type="protein sequence ID" value="AAS65305.1"/>
    <property type="molecule type" value="Genomic_DNA"/>
</dbReference>
<dbReference type="EMBL" id="AE014298">
    <property type="protein sequence ID" value="AAS65306.1"/>
    <property type="molecule type" value="Genomic_DNA"/>
</dbReference>
<dbReference type="EMBL" id="AE014298">
    <property type="protein sequence ID" value="AGB95245.1"/>
    <property type="molecule type" value="Genomic_DNA"/>
</dbReference>
<dbReference type="EMBL" id="BT011036">
    <property type="protein sequence ID" value="AAR30196.1"/>
    <property type="molecule type" value="mRNA"/>
</dbReference>
<dbReference type="PIR" id="S60709">
    <property type="entry name" value="S60709"/>
</dbReference>
<dbReference type="RefSeq" id="NP_001259402.1">
    <molecule id="P53624-2"/>
    <property type="nucleotide sequence ID" value="NM_001272473.2"/>
</dbReference>
<dbReference type="RefSeq" id="NP_511105.2">
    <molecule id="P53624-2"/>
    <property type="nucleotide sequence ID" value="NM_078550.4"/>
</dbReference>
<dbReference type="RefSeq" id="NP_727407.1">
    <molecule id="P53624-1"/>
    <property type="nucleotide sequence ID" value="NM_167223.3"/>
</dbReference>
<dbReference type="RefSeq" id="NP_996395.1">
    <molecule id="P53624-1"/>
    <property type="nucleotide sequence ID" value="NM_206672.3"/>
</dbReference>
<dbReference type="RefSeq" id="NP_996396.1">
    <molecule id="P53624-1"/>
    <property type="nucleotide sequence ID" value="NM_206673.3"/>
</dbReference>
<dbReference type="RefSeq" id="NP_996397.1">
    <molecule id="P53624-1"/>
    <property type="nucleotide sequence ID" value="NM_206674.3"/>
</dbReference>
<dbReference type="RefSeq" id="NP_996398.1">
    <molecule id="P53624-1"/>
    <property type="nucleotide sequence ID" value="NM_206675.3"/>
</dbReference>
<dbReference type="RefSeq" id="NP_996399.1">
    <molecule id="P53624-1"/>
    <property type="nucleotide sequence ID" value="NM_206676.3"/>
</dbReference>
<dbReference type="SMR" id="P53624"/>
<dbReference type="BioGRID" id="58390">
    <property type="interactions" value="3"/>
</dbReference>
<dbReference type="FunCoup" id="P53624">
    <property type="interactions" value="1716"/>
</dbReference>
<dbReference type="IntAct" id="P53624">
    <property type="interactions" value="2"/>
</dbReference>
<dbReference type="STRING" id="7227.FBpp0288908"/>
<dbReference type="BindingDB" id="P53624"/>
<dbReference type="ChEMBL" id="CHEMBL1697673"/>
<dbReference type="CAZy" id="GH47">
    <property type="family name" value="Glycoside Hydrolase Family 47"/>
</dbReference>
<dbReference type="GlyCosmos" id="P53624">
    <property type="glycosylation" value="1 site, No reported glycans"/>
</dbReference>
<dbReference type="GlyGen" id="P53624">
    <property type="glycosylation" value="1 site"/>
</dbReference>
<dbReference type="PaxDb" id="7227-FBpp0288908"/>
<dbReference type="DNASU" id="31957"/>
<dbReference type="EnsemblMetazoa" id="FBtr0299632">
    <molecule id="P53624-1"/>
    <property type="protein sequence ID" value="FBpp0288907"/>
    <property type="gene ID" value="FBgn0259170"/>
</dbReference>
<dbReference type="EnsemblMetazoa" id="FBtr0300511">
    <molecule id="P53624-1"/>
    <property type="protein sequence ID" value="FBpp0289738"/>
    <property type="gene ID" value="FBgn0259170"/>
</dbReference>
<dbReference type="EnsemblMetazoa" id="FBtr0300512">
    <molecule id="P53624-2"/>
    <property type="protein sequence ID" value="FBpp0289739"/>
    <property type="gene ID" value="FBgn0259170"/>
</dbReference>
<dbReference type="EnsemblMetazoa" id="FBtr0300513">
    <molecule id="P53624-1"/>
    <property type="protein sequence ID" value="FBpp0289740"/>
    <property type="gene ID" value="FBgn0259170"/>
</dbReference>
<dbReference type="EnsemblMetazoa" id="FBtr0300514">
    <molecule id="P53624-1"/>
    <property type="protein sequence ID" value="FBpp0289741"/>
    <property type="gene ID" value="FBgn0259170"/>
</dbReference>
<dbReference type="EnsemblMetazoa" id="FBtr0300515">
    <molecule id="P53624-1"/>
    <property type="protein sequence ID" value="FBpp0289742"/>
    <property type="gene ID" value="FBgn0259170"/>
</dbReference>
<dbReference type="EnsemblMetazoa" id="FBtr0300516">
    <molecule id="P53624-1"/>
    <property type="protein sequence ID" value="FBpp0289743"/>
    <property type="gene ID" value="FBgn0259170"/>
</dbReference>
<dbReference type="EnsemblMetazoa" id="FBtr0331759">
    <molecule id="P53624-2"/>
    <property type="protein sequence ID" value="FBpp0304147"/>
    <property type="gene ID" value="FBgn0259170"/>
</dbReference>
<dbReference type="GeneID" id="31957"/>
<dbReference type="KEGG" id="dme:Dmel_CG42275"/>
<dbReference type="AGR" id="FB:FBgn0259170"/>
<dbReference type="CTD" id="31957"/>
<dbReference type="FlyBase" id="FBgn0259170">
    <property type="gene designation" value="alpha-Man-Ia"/>
</dbReference>
<dbReference type="VEuPathDB" id="VectorBase:FBgn0259170"/>
<dbReference type="eggNOG" id="KOG2204">
    <property type="taxonomic scope" value="Eukaryota"/>
</dbReference>
<dbReference type="GeneTree" id="ENSGT00940000167910"/>
<dbReference type="HOGENOM" id="CLU_003818_3_2_1"/>
<dbReference type="InParanoid" id="P53624"/>
<dbReference type="OMA" id="PESFGWD"/>
<dbReference type="OrthoDB" id="8118055at2759"/>
<dbReference type="PhylomeDB" id="P53624"/>
<dbReference type="Reactome" id="R-DME-964827">
    <property type="pathway name" value="Progressive trimming of alpha-1,2-linked mannose residues from Man9/8/7GlcNAc2 to produce Man5GlcNAc2"/>
</dbReference>
<dbReference type="UniPathway" id="UPA00378"/>
<dbReference type="BioGRID-ORCS" id="31957">
    <property type="hits" value="1 hit in 3 CRISPR screens"/>
</dbReference>
<dbReference type="ChiTaRS" id="alpha-Man-Ia">
    <property type="organism name" value="fly"/>
</dbReference>
<dbReference type="GenomeRNAi" id="31957"/>
<dbReference type="PRO" id="PR:P53624"/>
<dbReference type="Proteomes" id="UP000000803">
    <property type="component" value="Chromosome X"/>
</dbReference>
<dbReference type="Bgee" id="FBgn0259170">
    <property type="expression patterns" value="Expressed in distal medullary amacrine neuron Dm1-5 (Drosophila) in insect head and 274 other cell types or tissues"/>
</dbReference>
<dbReference type="ExpressionAtlas" id="P53624">
    <property type="expression patterns" value="baseline and differential"/>
</dbReference>
<dbReference type="GO" id="GO:0012505">
    <property type="term" value="C:endomembrane system"/>
    <property type="evidence" value="ECO:0007005"/>
    <property type="project" value="FlyBase"/>
</dbReference>
<dbReference type="GO" id="GO:0005783">
    <property type="term" value="C:endoplasmic reticulum"/>
    <property type="evidence" value="ECO:0000318"/>
    <property type="project" value="GO_Central"/>
</dbReference>
<dbReference type="GO" id="GO:0000139">
    <property type="term" value="C:Golgi membrane"/>
    <property type="evidence" value="ECO:0000318"/>
    <property type="project" value="GO_Central"/>
</dbReference>
<dbReference type="GO" id="GO:0005509">
    <property type="term" value="F:calcium ion binding"/>
    <property type="evidence" value="ECO:0007669"/>
    <property type="project" value="InterPro"/>
</dbReference>
<dbReference type="GO" id="GO:0004571">
    <property type="term" value="F:mannosyl-oligosaccharide 1,2-alpha-mannosidase activity"/>
    <property type="evidence" value="ECO:0000314"/>
    <property type="project" value="FlyBase"/>
</dbReference>
<dbReference type="GO" id="GO:0005975">
    <property type="term" value="P:carbohydrate metabolic process"/>
    <property type="evidence" value="ECO:0007669"/>
    <property type="project" value="InterPro"/>
</dbReference>
<dbReference type="GO" id="GO:0008340">
    <property type="term" value="P:determination of adult lifespan"/>
    <property type="evidence" value="ECO:0000315"/>
    <property type="project" value="FlyBase"/>
</dbReference>
<dbReference type="GO" id="GO:0035010">
    <property type="term" value="P:encapsulation of foreign target"/>
    <property type="evidence" value="ECO:0000315"/>
    <property type="project" value="FlyBase"/>
</dbReference>
<dbReference type="GO" id="GO:0036503">
    <property type="term" value="P:ERAD pathway"/>
    <property type="evidence" value="ECO:0000318"/>
    <property type="project" value="GO_Central"/>
</dbReference>
<dbReference type="GO" id="GO:0006486">
    <property type="term" value="P:protein glycosylation"/>
    <property type="evidence" value="ECO:0007669"/>
    <property type="project" value="UniProtKB-UniPathway"/>
</dbReference>
<dbReference type="GO" id="GO:0072347">
    <property type="term" value="P:response to anesthetic"/>
    <property type="evidence" value="ECO:0000315"/>
    <property type="project" value="FlyBase"/>
</dbReference>
<dbReference type="FunFam" id="1.50.10.10:FF:000002">
    <property type="entry name" value="alpha-1,2-Mannosidase"/>
    <property type="match status" value="1"/>
</dbReference>
<dbReference type="Gene3D" id="1.50.10.10">
    <property type="match status" value="1"/>
</dbReference>
<dbReference type="InterPro" id="IPR012341">
    <property type="entry name" value="6hp_glycosidase-like_sf"/>
</dbReference>
<dbReference type="InterPro" id="IPR001382">
    <property type="entry name" value="Glyco_hydro_47"/>
</dbReference>
<dbReference type="InterPro" id="IPR050749">
    <property type="entry name" value="Glycosyl_Hydrolase_47"/>
</dbReference>
<dbReference type="InterPro" id="IPR036026">
    <property type="entry name" value="Seven-hairpin_glycosidases"/>
</dbReference>
<dbReference type="PANTHER" id="PTHR11742:SF6">
    <property type="entry name" value="MANNOSYL-OLIGOSACCHARIDE ALPHA-1,2-MANNOSIDASE IA-RELATED"/>
    <property type="match status" value="1"/>
</dbReference>
<dbReference type="PANTHER" id="PTHR11742">
    <property type="entry name" value="MANNOSYL-OLIGOSACCHARIDE ALPHA-1,2-MANNOSIDASE-RELATED"/>
    <property type="match status" value="1"/>
</dbReference>
<dbReference type="Pfam" id="PF01532">
    <property type="entry name" value="Glyco_hydro_47"/>
    <property type="match status" value="1"/>
</dbReference>
<dbReference type="PRINTS" id="PR00747">
    <property type="entry name" value="GLYHDRLASE47"/>
</dbReference>
<dbReference type="SUPFAM" id="SSF48225">
    <property type="entry name" value="Seven-hairpin glycosidases"/>
    <property type="match status" value="1"/>
</dbReference>
<accession>P53624</accession>
<accession>A4V480</accession>
<accession>M9PH54</accession>
<accession>P53625</accession>
<accession>Q9W2W6</accession>
<accession>Q9W2W7</accession>
<name>MA1A1_DROME</name>
<organism>
    <name type="scientific">Drosophila melanogaster</name>
    <name type="common">Fruit fly</name>
    <dbReference type="NCBI Taxonomy" id="7227"/>
    <lineage>
        <taxon>Eukaryota</taxon>
        <taxon>Metazoa</taxon>
        <taxon>Ecdysozoa</taxon>
        <taxon>Arthropoda</taxon>
        <taxon>Hexapoda</taxon>
        <taxon>Insecta</taxon>
        <taxon>Pterygota</taxon>
        <taxon>Neoptera</taxon>
        <taxon>Endopterygota</taxon>
        <taxon>Diptera</taxon>
        <taxon>Brachycera</taxon>
        <taxon>Muscomorpha</taxon>
        <taxon>Ephydroidea</taxon>
        <taxon>Drosophilidae</taxon>
        <taxon>Drosophila</taxon>
        <taxon>Sophophora</taxon>
    </lineage>
</organism>
<keyword id="KW-0877">Alternative promoter usage</keyword>
<keyword id="KW-0106">Calcium</keyword>
<keyword id="KW-1015">Disulfide bond</keyword>
<keyword id="KW-0325">Glycoprotein</keyword>
<keyword id="KW-0326">Glycosidase</keyword>
<keyword id="KW-0333">Golgi apparatus</keyword>
<keyword id="KW-0378">Hydrolase</keyword>
<keyword id="KW-0472">Membrane</keyword>
<keyword id="KW-0479">Metal-binding</keyword>
<keyword id="KW-1185">Reference proteome</keyword>
<keyword id="KW-0735">Signal-anchor</keyword>
<keyword id="KW-0812">Transmembrane</keyword>
<keyword id="KW-1133">Transmembrane helix</keyword>
<proteinExistence type="evidence at transcript level"/>
<sequence length="667" mass="74966">MYRISPIGRKSNFHSREKCLIGLVLVTLCFLCFGGIFLLPDNFGSDRVLRVYKHFRKAGPEIFIPAPPLAAHAPHRSEDPHFIGDRQRLEQKIRAELGDMLDEPPAAGGGEPGQFQVLAQQAQAPAPVAALADQPLDQDEGHAAIPVLAAPVQGDNAASQASSHPQSSAQQHNQQQPQLPLGGGGNDQAPDTLDATLEERRQKVKEMMEHAWHNYKLYAWGKNELRPLSQRPHSASIFGSYDLGATIVDGLDTLYIMGLEKEYREGRDWIERKFSLDNISAELSVFETNIRFVGGMLTLYAFTGDPLYKEKAQHVADKLLPAFQTPTGIPYALVNTKTGVAKNYGWASGGSSILSEFGTLHLEFAYLSDITGNPLYRERVQTIRQVLKEIEKPKGLYPNFLNPKTGKWGQLHMSLGALGDSYYEYLLKAWLQSGQTDEEAREMFDEAMLAILDKMVRTSPGGLTYVSDLKFDRLEHKMDHLACFSGGLFALGAATRQNDYTDKYMEVGKGITNTCHESYIRAPTQLGPEAFRFSEAVEARALRSQEKYYILRPETFESYFVLWRLTHDQKYRDWGWEAVLALEKHCRTAHGYCGLRNVYQQEPQKDDVQQSFFLAETLKYLYLLFSDDSVLPLDEWVFNTEAHPLPIKGANAYYRQAPVTLPVSNAS</sequence>
<protein>
    <recommendedName>
        <fullName evidence="11">Mannosyl-oligosaccharide alpha-1,2-mannosidase IA</fullName>
        <ecNumber evidence="2">3.2.1.113</ecNumber>
    </recommendedName>
    <alternativeName>
        <fullName>Man(9)-alpha-mannosidase</fullName>
    </alternativeName>
    <alternativeName>
        <fullName>Mannosidase-1</fullName>
    </alternativeName>
</protein>
<comment type="function">
    <text evidence="4">Involved in the maturation of Asn-linked oligosaccharides. Progressively trim alpha-1,2-linked mannose residues from Man(9)GlcNAc(2) to produce Man(5)GlcNAc(2).</text>
</comment>
<comment type="catalytic activity">
    <reaction evidence="2">
        <text>N(4)-(alpha-D-Man-(1-&gt;2)-alpha-D-Man-(1-&gt;2)-alpha-D-Man-(1-&gt;3)-[alpha-D-Man-(1-&gt;2)-alpha-D-Man-(1-&gt;3)-[alpha-D-Man-(1-&gt;2)-alpha-D-Man-(1-&gt;6)]-alpha-D-Man-(1-&gt;6)]-beta-D-Man-(1-&gt;4)-beta-D-GlcNAc-(1-&gt;4)-beta-D-GlcNAc)-L-asparaginyl-[protein] (N-glucan mannose isomer 9A1,2,3B1,2,3) + 4 H2O = N(4)-(alpha-D-Man-(1-&gt;3)-[alpha-D-Man-(1-&gt;3)-[alpha-D-Man-(1-&gt;6)]-alpha-D-Man-(1-&gt;6)]-beta-D-Man-(1-&gt;4)-beta-D-GlcNAc-(1-&gt;4)-beta-D-GlcNAc)-L-asparaginyl-[protein] (N-glucan mannose isomer 5A1,2) + 4 beta-D-mannose</text>
        <dbReference type="Rhea" id="RHEA:56008"/>
        <dbReference type="Rhea" id="RHEA-COMP:14356"/>
        <dbReference type="Rhea" id="RHEA-COMP:14367"/>
        <dbReference type="ChEBI" id="CHEBI:15377"/>
        <dbReference type="ChEBI" id="CHEBI:28563"/>
        <dbReference type="ChEBI" id="CHEBI:59087"/>
        <dbReference type="ChEBI" id="CHEBI:139493"/>
        <dbReference type="EC" id="3.2.1.113"/>
    </reaction>
</comment>
<comment type="catalytic activity">
    <reaction evidence="2">
        <text>N(4)-(alpha-D-Man-(1-&gt;2)-alpha-D-Man-(1-&gt;2)-alpha-D-Man-(1-&gt;3)-[alpha-D-Man-(1-&gt;3)-[alpha-D-Man-(1-&gt;2)-alpha-D-Man-(1-&gt;6)]-alpha-D-Man-(1-&gt;6)]-beta-D-Man-(1-&gt;4)-beta-D-GlcNAc-(1-&gt;4)-beta-D-GlcNAc)-L-asparaginyl-[protein] (N-glucan mannose isomer 8A1,2,3B1,3) + 3 H2O = N(4)-(alpha-D-Man-(1-&gt;3)-[alpha-D-Man-(1-&gt;3)-[alpha-D-Man-(1-&gt;6)]-alpha-D-Man-(1-&gt;6)]-beta-D-Man-(1-&gt;4)-beta-D-GlcNAc-(1-&gt;4)-beta-D-GlcNAc)-L-asparaginyl-[protein] (N-glucan mannose isomer 5A1,2) + 3 beta-D-mannose</text>
        <dbReference type="Rhea" id="RHEA:56028"/>
        <dbReference type="Rhea" id="RHEA-COMP:14358"/>
        <dbReference type="Rhea" id="RHEA-COMP:14367"/>
        <dbReference type="ChEBI" id="CHEBI:15377"/>
        <dbReference type="ChEBI" id="CHEBI:28563"/>
        <dbReference type="ChEBI" id="CHEBI:59087"/>
        <dbReference type="ChEBI" id="CHEBI:60628"/>
        <dbReference type="EC" id="3.2.1.113"/>
    </reaction>
</comment>
<comment type="cofactor">
    <cofactor evidence="4">
        <name>Ca(2+)</name>
        <dbReference type="ChEBI" id="CHEBI:29108"/>
    </cofactor>
    <cofactor evidence="4">
        <name>Mg(2+)</name>
        <dbReference type="ChEBI" id="CHEBI:18420"/>
    </cofactor>
</comment>
<comment type="pathway">
    <text evidence="4">Protein modification; protein glycosylation.</text>
</comment>
<comment type="subcellular location">
    <subcellularLocation>
        <location evidence="3">Golgi apparatus membrane</location>
        <topology evidence="10">Single-pass type II membrane protein</topology>
    </subcellularLocation>
</comment>
<comment type="alternative products">
    <event type="alternative promoter"/>
    <isoform>
        <id>P53624-1</id>
        <name evidence="11">H</name>
        <name evidence="9">A</name>
        <name evidence="11">J</name>
        <name evidence="11">L</name>
        <name evidence="11">M</name>
        <name evidence="11">N</name>
        <name evidence="11">O</name>
        <sequence type="displayed"/>
    </isoform>
    <isoform>
        <id>P53624-2</id>
        <id>P53625-1</id>
        <name evidence="11">K</name>
        <name evidence="9">B</name>
        <name evidence="11">P</name>
        <sequence type="described" ref="VSP_057904"/>
    </isoform>
</comment>
<comment type="tissue specificity">
    <text evidence="8">Complex spatial distribution during embryogenesis, including expression in lobula plate giant neurons. Also expressed in adult wing and eyes.</text>
</comment>
<comment type="developmental stage">
    <text evidence="8">Expressed both maternally and zygotically during embryonic stages.</text>
</comment>
<comment type="similarity">
    <text evidence="6">Belongs to the glycosyl hydrolase 47 family.</text>
</comment>
<reference key="1">
    <citation type="journal article" date="1995" name="Dev. Biol.">
        <title>Molecular and genetic analysis of the Drosophila mas-1 (mannosidase-1) gene which encodes a glycoprotein processing alpha 1,2-mannosidase.</title>
        <authorList>
            <person name="Kerscher S."/>
            <person name="Albert S."/>
            <person name="Wucherpfennig D."/>
            <person name="Heisenberg M."/>
            <person name="Schneuwly S."/>
        </authorList>
    </citation>
    <scope>NUCLEOTIDE SEQUENCE [MRNA] (ISOFORMS H AND K)</scope>
    <scope>TISSUE SPECIFICITY</scope>
    <scope>DEVELOPMENTAL STAGE</scope>
    <source>
        <strain>Berlin</strain>
        <tissue evidence="9">Head</tissue>
        <tissue evidence="9">Ovary</tissue>
    </source>
</reference>
<reference key="2">
    <citation type="journal article" date="2000" name="Science">
        <title>The genome sequence of Drosophila melanogaster.</title>
        <authorList>
            <person name="Adams M.D."/>
            <person name="Celniker S.E."/>
            <person name="Holt R.A."/>
            <person name="Evans C.A."/>
            <person name="Gocayne J.D."/>
            <person name="Amanatides P.G."/>
            <person name="Scherer S.E."/>
            <person name="Li P.W."/>
            <person name="Hoskins R.A."/>
            <person name="Galle R.F."/>
            <person name="George R.A."/>
            <person name="Lewis S.E."/>
            <person name="Richards S."/>
            <person name="Ashburner M."/>
            <person name="Henderson S.N."/>
            <person name="Sutton G.G."/>
            <person name="Wortman J.R."/>
            <person name="Yandell M.D."/>
            <person name="Zhang Q."/>
            <person name="Chen L.X."/>
            <person name="Brandon R.C."/>
            <person name="Rogers Y.-H.C."/>
            <person name="Blazej R.G."/>
            <person name="Champe M."/>
            <person name="Pfeiffer B.D."/>
            <person name="Wan K.H."/>
            <person name="Doyle C."/>
            <person name="Baxter E.G."/>
            <person name="Helt G."/>
            <person name="Nelson C.R."/>
            <person name="Miklos G.L.G."/>
            <person name="Abril J.F."/>
            <person name="Agbayani A."/>
            <person name="An H.-J."/>
            <person name="Andrews-Pfannkoch C."/>
            <person name="Baldwin D."/>
            <person name="Ballew R.M."/>
            <person name="Basu A."/>
            <person name="Baxendale J."/>
            <person name="Bayraktaroglu L."/>
            <person name="Beasley E.M."/>
            <person name="Beeson K.Y."/>
            <person name="Benos P.V."/>
            <person name="Berman B.P."/>
            <person name="Bhandari D."/>
            <person name="Bolshakov S."/>
            <person name="Borkova D."/>
            <person name="Botchan M.R."/>
            <person name="Bouck J."/>
            <person name="Brokstein P."/>
            <person name="Brottier P."/>
            <person name="Burtis K.C."/>
            <person name="Busam D.A."/>
            <person name="Butler H."/>
            <person name="Cadieu E."/>
            <person name="Center A."/>
            <person name="Chandra I."/>
            <person name="Cherry J.M."/>
            <person name="Cawley S."/>
            <person name="Dahlke C."/>
            <person name="Davenport L.B."/>
            <person name="Davies P."/>
            <person name="de Pablos B."/>
            <person name="Delcher A."/>
            <person name="Deng Z."/>
            <person name="Mays A.D."/>
            <person name="Dew I."/>
            <person name="Dietz S.M."/>
            <person name="Dodson K."/>
            <person name="Doup L.E."/>
            <person name="Downes M."/>
            <person name="Dugan-Rocha S."/>
            <person name="Dunkov B.C."/>
            <person name="Dunn P."/>
            <person name="Durbin K.J."/>
            <person name="Evangelista C.C."/>
            <person name="Ferraz C."/>
            <person name="Ferriera S."/>
            <person name="Fleischmann W."/>
            <person name="Fosler C."/>
            <person name="Gabrielian A.E."/>
            <person name="Garg N.S."/>
            <person name="Gelbart W.M."/>
            <person name="Glasser K."/>
            <person name="Glodek A."/>
            <person name="Gong F."/>
            <person name="Gorrell J.H."/>
            <person name="Gu Z."/>
            <person name="Guan P."/>
            <person name="Harris M."/>
            <person name="Harris N.L."/>
            <person name="Harvey D.A."/>
            <person name="Heiman T.J."/>
            <person name="Hernandez J.R."/>
            <person name="Houck J."/>
            <person name="Hostin D."/>
            <person name="Houston K.A."/>
            <person name="Howland T.J."/>
            <person name="Wei M.-H."/>
            <person name="Ibegwam C."/>
            <person name="Jalali M."/>
            <person name="Kalush F."/>
            <person name="Karpen G.H."/>
            <person name="Ke Z."/>
            <person name="Kennison J.A."/>
            <person name="Ketchum K.A."/>
            <person name="Kimmel B.E."/>
            <person name="Kodira C.D."/>
            <person name="Kraft C.L."/>
            <person name="Kravitz S."/>
            <person name="Kulp D."/>
            <person name="Lai Z."/>
            <person name="Lasko P."/>
            <person name="Lei Y."/>
            <person name="Levitsky A.A."/>
            <person name="Li J.H."/>
            <person name="Li Z."/>
            <person name="Liang Y."/>
            <person name="Lin X."/>
            <person name="Liu X."/>
            <person name="Mattei B."/>
            <person name="McIntosh T.C."/>
            <person name="McLeod M.P."/>
            <person name="McPherson D."/>
            <person name="Merkulov G."/>
            <person name="Milshina N.V."/>
            <person name="Mobarry C."/>
            <person name="Morris J."/>
            <person name="Moshrefi A."/>
            <person name="Mount S.M."/>
            <person name="Moy M."/>
            <person name="Murphy B."/>
            <person name="Murphy L."/>
            <person name="Muzny D.M."/>
            <person name="Nelson D.L."/>
            <person name="Nelson D.R."/>
            <person name="Nelson K.A."/>
            <person name="Nixon K."/>
            <person name="Nusskern D.R."/>
            <person name="Pacleb J.M."/>
            <person name="Palazzolo M."/>
            <person name="Pittman G.S."/>
            <person name="Pan S."/>
            <person name="Pollard J."/>
            <person name="Puri V."/>
            <person name="Reese M.G."/>
            <person name="Reinert K."/>
            <person name="Remington K."/>
            <person name="Saunders R.D.C."/>
            <person name="Scheeler F."/>
            <person name="Shen H."/>
            <person name="Shue B.C."/>
            <person name="Siden-Kiamos I."/>
            <person name="Simpson M."/>
            <person name="Skupski M.P."/>
            <person name="Smith T.J."/>
            <person name="Spier E."/>
            <person name="Spradling A.C."/>
            <person name="Stapleton M."/>
            <person name="Strong R."/>
            <person name="Sun E."/>
            <person name="Svirskas R."/>
            <person name="Tector C."/>
            <person name="Turner R."/>
            <person name="Venter E."/>
            <person name="Wang A.H."/>
            <person name="Wang X."/>
            <person name="Wang Z.-Y."/>
            <person name="Wassarman D.A."/>
            <person name="Weinstock G.M."/>
            <person name="Weissenbach J."/>
            <person name="Williams S.M."/>
            <person name="Woodage T."/>
            <person name="Worley K.C."/>
            <person name="Wu D."/>
            <person name="Yang S."/>
            <person name="Yao Q.A."/>
            <person name="Ye J."/>
            <person name="Yeh R.-F."/>
            <person name="Zaveri J.S."/>
            <person name="Zhan M."/>
            <person name="Zhang G."/>
            <person name="Zhao Q."/>
            <person name="Zheng L."/>
            <person name="Zheng X.H."/>
            <person name="Zhong F.N."/>
            <person name="Zhong W."/>
            <person name="Zhou X."/>
            <person name="Zhu S.C."/>
            <person name="Zhu X."/>
            <person name="Smith H.O."/>
            <person name="Gibbs R.A."/>
            <person name="Myers E.W."/>
            <person name="Rubin G.M."/>
            <person name="Venter J.C."/>
        </authorList>
    </citation>
    <scope>NUCLEOTIDE SEQUENCE [LARGE SCALE GENOMIC DNA]</scope>
    <source>
        <strain>Berkeley</strain>
    </source>
</reference>
<reference key="3">
    <citation type="journal article" date="2002" name="Genome Biol.">
        <title>Annotation of the Drosophila melanogaster euchromatic genome: a systematic review.</title>
        <authorList>
            <person name="Misra S."/>
            <person name="Crosby M.A."/>
            <person name="Mungall C.J."/>
            <person name="Matthews B.B."/>
            <person name="Campbell K.S."/>
            <person name="Hradecky P."/>
            <person name="Huang Y."/>
            <person name="Kaminker J.S."/>
            <person name="Millburn G.H."/>
            <person name="Prochnik S.E."/>
            <person name="Smith C.D."/>
            <person name="Tupy J.L."/>
            <person name="Whitfield E.J."/>
            <person name="Bayraktaroglu L."/>
            <person name="Berman B.P."/>
            <person name="Bettencourt B.R."/>
            <person name="Celniker S.E."/>
            <person name="de Grey A.D.N.J."/>
            <person name="Drysdale R.A."/>
            <person name="Harris N.L."/>
            <person name="Richter J."/>
            <person name="Russo S."/>
            <person name="Schroeder A.J."/>
            <person name="Shu S.Q."/>
            <person name="Stapleton M."/>
            <person name="Yamada C."/>
            <person name="Ashburner M."/>
            <person name="Gelbart W.M."/>
            <person name="Rubin G.M."/>
            <person name="Lewis S.E."/>
        </authorList>
    </citation>
    <scope>GENOME REANNOTATION</scope>
    <source>
        <strain>Berkeley</strain>
    </source>
</reference>
<reference key="4">
    <citation type="submission" date="2003-12" db="EMBL/GenBank/DDBJ databases">
        <authorList>
            <person name="Stapleton M."/>
            <person name="Brokstein P."/>
            <person name="Hong L."/>
            <person name="Agbayani A."/>
            <person name="Carlson J.W."/>
            <person name="Champe M."/>
            <person name="Chavez C."/>
            <person name="Dorsett V."/>
            <person name="Dresnek D."/>
            <person name="Farfan D."/>
            <person name="Frise E."/>
            <person name="George R.A."/>
            <person name="Gonzalez M."/>
            <person name="Guarin H."/>
            <person name="Kronmiller B."/>
            <person name="Li P.W."/>
            <person name="Liao G."/>
            <person name="Miranda A."/>
            <person name="Mungall C.J."/>
            <person name="Nunoo J."/>
            <person name="Pacleb J.M."/>
            <person name="Paragas V."/>
            <person name="Park S."/>
            <person name="Patel S."/>
            <person name="Phouanenavong S."/>
            <person name="Wan K.H."/>
            <person name="Yu C."/>
            <person name="Lewis S.E."/>
            <person name="Rubin G.M."/>
            <person name="Celniker S.E."/>
        </authorList>
    </citation>
    <scope>NUCLEOTIDE SEQUENCE [LARGE SCALE MRNA]</scope>
    <source>
        <strain>Berkeley</strain>
        <tissue>Embryo</tissue>
    </source>
</reference>
<evidence type="ECO:0000250" key="1">
    <source>
        <dbReference type="UniProtKB" id="P31723"/>
    </source>
</evidence>
<evidence type="ECO:0000250" key="2">
    <source>
        <dbReference type="UniProtKB" id="P32906"/>
    </source>
</evidence>
<evidence type="ECO:0000250" key="3">
    <source>
        <dbReference type="UniProtKB" id="P39098"/>
    </source>
</evidence>
<evidence type="ECO:0000250" key="4">
    <source>
        <dbReference type="UniProtKB" id="Q2ULB2"/>
    </source>
</evidence>
<evidence type="ECO:0000255" key="5"/>
<evidence type="ECO:0000255" key="6">
    <source>
        <dbReference type="RuleBase" id="RU361193"/>
    </source>
</evidence>
<evidence type="ECO:0000256" key="7">
    <source>
        <dbReference type="SAM" id="MobiDB-lite"/>
    </source>
</evidence>
<evidence type="ECO:0000269" key="8">
    <source>
    </source>
</evidence>
<evidence type="ECO:0000303" key="9">
    <source>
    </source>
</evidence>
<evidence type="ECO:0000305" key="10"/>
<evidence type="ECO:0000312" key="11">
    <source>
        <dbReference type="FlyBase" id="FBgn0259170"/>
    </source>
</evidence>
<gene>
    <name evidence="11" type="primary">alpha-Man-Ia</name>
    <name evidence="11" type="synonym">alpha-man-1</name>
    <name evidence="11" type="synonym">mas-1</name>
    <name evidence="11" type="ORF">CG32684</name>
</gene>